<dbReference type="EC" id="4.1.1.17"/>
<dbReference type="EMBL" id="X66600">
    <property type="protein sequence ID" value="CAA47166.1"/>
    <property type="molecule type" value="Genomic_DNA"/>
</dbReference>
<dbReference type="EMBL" id="AE013599">
    <property type="protein sequence ID" value="AAF59149.2"/>
    <property type="molecule type" value="Genomic_DNA"/>
</dbReference>
<dbReference type="RefSeq" id="NP_477053.2">
    <property type="nucleotide sequence ID" value="NM_057705.4"/>
</dbReference>
<dbReference type="SMR" id="P40808"/>
<dbReference type="BioGRID" id="61628">
    <property type="interactions" value="2"/>
</dbReference>
<dbReference type="FunCoup" id="P40808">
    <property type="interactions" value="440"/>
</dbReference>
<dbReference type="IntAct" id="P40808">
    <property type="interactions" value="2"/>
</dbReference>
<dbReference type="STRING" id="7227.FBpp0087940"/>
<dbReference type="PaxDb" id="7227-FBpp0087940"/>
<dbReference type="EnsemblMetazoa" id="FBtr0088864">
    <property type="protein sequence ID" value="FBpp0087940"/>
    <property type="gene ID" value="FBgn0013308"/>
</dbReference>
<dbReference type="GeneID" id="35767"/>
<dbReference type="KEGG" id="dme:Dmel_CG8719"/>
<dbReference type="AGR" id="FB:FBgn0013308"/>
<dbReference type="CTD" id="35767"/>
<dbReference type="FlyBase" id="FBgn0013308">
    <property type="gene designation" value="Odc2"/>
</dbReference>
<dbReference type="VEuPathDB" id="VectorBase:FBgn0013308"/>
<dbReference type="eggNOG" id="KOG0622">
    <property type="taxonomic scope" value="Eukaryota"/>
</dbReference>
<dbReference type="GeneTree" id="ENSGT00950000182995"/>
<dbReference type="HOGENOM" id="CLU_026444_1_1_1"/>
<dbReference type="InParanoid" id="P40808"/>
<dbReference type="OMA" id="FTCYSVK"/>
<dbReference type="OrthoDB" id="5034579at2759"/>
<dbReference type="PhylomeDB" id="P40808"/>
<dbReference type="Reactome" id="R-DME-350562">
    <property type="pathway name" value="Regulation of ornithine decarboxylase (ODC)"/>
</dbReference>
<dbReference type="Reactome" id="R-DME-351143">
    <property type="pathway name" value="Agmatine biosynthesis"/>
</dbReference>
<dbReference type="UniPathway" id="UPA00535">
    <property type="reaction ID" value="UER00288"/>
</dbReference>
<dbReference type="BioGRID-ORCS" id="35767">
    <property type="hits" value="0 hits in 3 CRISPR screens"/>
</dbReference>
<dbReference type="GenomeRNAi" id="35767"/>
<dbReference type="PRO" id="PR:P40808"/>
<dbReference type="Proteomes" id="UP000000803">
    <property type="component" value="Chromosome 2R"/>
</dbReference>
<dbReference type="Bgee" id="FBgn0013308">
    <property type="expression patterns" value="Expressed in fat body cell in body wall and 13 other cell types or tissues"/>
</dbReference>
<dbReference type="ExpressionAtlas" id="P40808">
    <property type="expression patterns" value="baseline and differential"/>
</dbReference>
<dbReference type="GO" id="GO:0005737">
    <property type="term" value="C:cytoplasm"/>
    <property type="evidence" value="ECO:0000318"/>
    <property type="project" value="GO_Central"/>
</dbReference>
<dbReference type="GO" id="GO:0004586">
    <property type="term" value="F:ornithine decarboxylase activity"/>
    <property type="evidence" value="ECO:0000250"/>
    <property type="project" value="FlyBase"/>
</dbReference>
<dbReference type="GO" id="GO:0033387">
    <property type="term" value="P:putrescine biosynthetic process from arginine, via ornithine"/>
    <property type="evidence" value="ECO:0000318"/>
    <property type="project" value="GO_Central"/>
</dbReference>
<dbReference type="CDD" id="cd00622">
    <property type="entry name" value="PLPDE_III_ODC"/>
    <property type="match status" value="1"/>
</dbReference>
<dbReference type="FunFam" id="3.20.20.10:FF:000005">
    <property type="entry name" value="Ornithine decarboxylase"/>
    <property type="match status" value="1"/>
</dbReference>
<dbReference type="Gene3D" id="3.20.20.10">
    <property type="entry name" value="Alanine racemase"/>
    <property type="match status" value="1"/>
</dbReference>
<dbReference type="Gene3D" id="2.40.37.10">
    <property type="entry name" value="Lyase, Ornithine Decarboxylase, Chain A, domain 1"/>
    <property type="match status" value="1"/>
</dbReference>
<dbReference type="InterPro" id="IPR009006">
    <property type="entry name" value="Ala_racemase/Decarboxylase_C"/>
</dbReference>
<dbReference type="InterPro" id="IPR022643">
    <property type="entry name" value="De-COase2_C"/>
</dbReference>
<dbReference type="InterPro" id="IPR022644">
    <property type="entry name" value="De-COase2_N"/>
</dbReference>
<dbReference type="InterPro" id="IPR022653">
    <property type="entry name" value="De-COase2_pyr-phos_BS"/>
</dbReference>
<dbReference type="InterPro" id="IPR000183">
    <property type="entry name" value="Orn/DAP/Arg_de-COase"/>
</dbReference>
<dbReference type="InterPro" id="IPR002433">
    <property type="entry name" value="Orn_de-COase"/>
</dbReference>
<dbReference type="InterPro" id="IPR029066">
    <property type="entry name" value="PLP-binding_barrel"/>
</dbReference>
<dbReference type="PANTHER" id="PTHR11482">
    <property type="entry name" value="ARGININE/DIAMINOPIMELATE/ORNITHINE DECARBOXYLASE"/>
    <property type="match status" value="1"/>
</dbReference>
<dbReference type="PANTHER" id="PTHR11482:SF6">
    <property type="entry name" value="ORNITHINE DECARBOXYLASE 1-RELATED"/>
    <property type="match status" value="1"/>
</dbReference>
<dbReference type="Pfam" id="PF02784">
    <property type="entry name" value="Orn_Arg_deC_N"/>
    <property type="match status" value="1"/>
</dbReference>
<dbReference type="Pfam" id="PF00278">
    <property type="entry name" value="Orn_DAP_Arg_deC"/>
    <property type="match status" value="1"/>
</dbReference>
<dbReference type="PRINTS" id="PR01179">
    <property type="entry name" value="ODADCRBXLASE"/>
</dbReference>
<dbReference type="PRINTS" id="PR01182">
    <property type="entry name" value="ORNDCRBXLASE"/>
</dbReference>
<dbReference type="SUPFAM" id="SSF50621">
    <property type="entry name" value="Alanine racemase C-terminal domain-like"/>
    <property type="match status" value="1"/>
</dbReference>
<dbReference type="SUPFAM" id="SSF51419">
    <property type="entry name" value="PLP-binding barrel"/>
    <property type="match status" value="1"/>
</dbReference>
<dbReference type="PROSITE" id="PS00878">
    <property type="entry name" value="ODR_DC_2_1"/>
    <property type="match status" value="1"/>
</dbReference>
<dbReference type="PROSITE" id="PS00879">
    <property type="entry name" value="ODR_DC_2_2"/>
    <property type="match status" value="1"/>
</dbReference>
<sequence length="393" mass="44153">MVNGDLRIQYYDEELNIRKVIEQADLEHLDQALNICDLSSLERKLRLWHKLMPRIEPHYAVKCNDDPVVVKFLADLGTGFDCASKNELKLVLGLGVSPERIIFAHPCRPASHLRYAKEQQVVNGTVDNEYEIYKLRKHYPDSNLIVRFKSEAKKALCPLGDKYGCDAEADAAALMLLAKALGLKVTGTSFHVGSGCSEVEAYDRAIEKAENIFKVGEMIGHKMELLDVGGGFPGIDDEMFEEIAQSVNTSVELRFPDKRIRIISEPGRFFVEAAYTLICKVHAKREVRSKDGKLDTMMYYLNDGIFGAFAGMFYYPEEVAPELYLDEAESLPKLKSVIWGPSCDAMDKISDLLLPNLNPGDLLGFRNMGAYTMPIASPFNGFDVPETRFFKAK</sequence>
<reference key="1">
    <citation type="journal article" date="1993" name="DNA Cell Biol.">
        <title>Isolation and characterization of the Drosophila ornithine decarboxylase locus: evidence for the presence of two transcribed ODC genes in the Drosophila genome.</title>
        <authorList>
            <person name="Rom E."/>
            <person name="Kahana C."/>
        </authorList>
    </citation>
    <scope>NUCLEOTIDE SEQUENCE [GENOMIC DNA]</scope>
    <source>
        <strain>Canton-S</strain>
    </source>
</reference>
<reference key="2">
    <citation type="journal article" date="2000" name="Science">
        <title>The genome sequence of Drosophila melanogaster.</title>
        <authorList>
            <person name="Adams M.D."/>
            <person name="Celniker S.E."/>
            <person name="Holt R.A."/>
            <person name="Evans C.A."/>
            <person name="Gocayne J.D."/>
            <person name="Amanatides P.G."/>
            <person name="Scherer S.E."/>
            <person name="Li P.W."/>
            <person name="Hoskins R.A."/>
            <person name="Galle R.F."/>
            <person name="George R.A."/>
            <person name="Lewis S.E."/>
            <person name="Richards S."/>
            <person name="Ashburner M."/>
            <person name="Henderson S.N."/>
            <person name="Sutton G.G."/>
            <person name="Wortman J.R."/>
            <person name="Yandell M.D."/>
            <person name="Zhang Q."/>
            <person name="Chen L.X."/>
            <person name="Brandon R.C."/>
            <person name="Rogers Y.-H.C."/>
            <person name="Blazej R.G."/>
            <person name="Champe M."/>
            <person name="Pfeiffer B.D."/>
            <person name="Wan K.H."/>
            <person name="Doyle C."/>
            <person name="Baxter E.G."/>
            <person name="Helt G."/>
            <person name="Nelson C.R."/>
            <person name="Miklos G.L.G."/>
            <person name="Abril J.F."/>
            <person name="Agbayani A."/>
            <person name="An H.-J."/>
            <person name="Andrews-Pfannkoch C."/>
            <person name="Baldwin D."/>
            <person name="Ballew R.M."/>
            <person name="Basu A."/>
            <person name="Baxendale J."/>
            <person name="Bayraktaroglu L."/>
            <person name="Beasley E.M."/>
            <person name="Beeson K.Y."/>
            <person name="Benos P.V."/>
            <person name="Berman B.P."/>
            <person name="Bhandari D."/>
            <person name="Bolshakov S."/>
            <person name="Borkova D."/>
            <person name="Botchan M.R."/>
            <person name="Bouck J."/>
            <person name="Brokstein P."/>
            <person name="Brottier P."/>
            <person name="Burtis K.C."/>
            <person name="Busam D.A."/>
            <person name="Butler H."/>
            <person name="Cadieu E."/>
            <person name="Center A."/>
            <person name="Chandra I."/>
            <person name="Cherry J.M."/>
            <person name="Cawley S."/>
            <person name="Dahlke C."/>
            <person name="Davenport L.B."/>
            <person name="Davies P."/>
            <person name="de Pablos B."/>
            <person name="Delcher A."/>
            <person name="Deng Z."/>
            <person name="Mays A.D."/>
            <person name="Dew I."/>
            <person name="Dietz S.M."/>
            <person name="Dodson K."/>
            <person name="Doup L.E."/>
            <person name="Downes M."/>
            <person name="Dugan-Rocha S."/>
            <person name="Dunkov B.C."/>
            <person name="Dunn P."/>
            <person name="Durbin K.J."/>
            <person name="Evangelista C.C."/>
            <person name="Ferraz C."/>
            <person name="Ferriera S."/>
            <person name="Fleischmann W."/>
            <person name="Fosler C."/>
            <person name="Gabrielian A.E."/>
            <person name="Garg N.S."/>
            <person name="Gelbart W.M."/>
            <person name="Glasser K."/>
            <person name="Glodek A."/>
            <person name="Gong F."/>
            <person name="Gorrell J.H."/>
            <person name="Gu Z."/>
            <person name="Guan P."/>
            <person name="Harris M."/>
            <person name="Harris N.L."/>
            <person name="Harvey D.A."/>
            <person name="Heiman T.J."/>
            <person name="Hernandez J.R."/>
            <person name="Houck J."/>
            <person name="Hostin D."/>
            <person name="Houston K.A."/>
            <person name="Howland T.J."/>
            <person name="Wei M.-H."/>
            <person name="Ibegwam C."/>
            <person name="Jalali M."/>
            <person name="Kalush F."/>
            <person name="Karpen G.H."/>
            <person name="Ke Z."/>
            <person name="Kennison J.A."/>
            <person name="Ketchum K.A."/>
            <person name="Kimmel B.E."/>
            <person name="Kodira C.D."/>
            <person name="Kraft C.L."/>
            <person name="Kravitz S."/>
            <person name="Kulp D."/>
            <person name="Lai Z."/>
            <person name="Lasko P."/>
            <person name="Lei Y."/>
            <person name="Levitsky A.A."/>
            <person name="Li J.H."/>
            <person name="Li Z."/>
            <person name="Liang Y."/>
            <person name="Lin X."/>
            <person name="Liu X."/>
            <person name="Mattei B."/>
            <person name="McIntosh T.C."/>
            <person name="McLeod M.P."/>
            <person name="McPherson D."/>
            <person name="Merkulov G."/>
            <person name="Milshina N.V."/>
            <person name="Mobarry C."/>
            <person name="Morris J."/>
            <person name="Moshrefi A."/>
            <person name="Mount S.M."/>
            <person name="Moy M."/>
            <person name="Murphy B."/>
            <person name="Murphy L."/>
            <person name="Muzny D.M."/>
            <person name="Nelson D.L."/>
            <person name="Nelson D.R."/>
            <person name="Nelson K.A."/>
            <person name="Nixon K."/>
            <person name="Nusskern D.R."/>
            <person name="Pacleb J.M."/>
            <person name="Palazzolo M."/>
            <person name="Pittman G.S."/>
            <person name="Pan S."/>
            <person name="Pollard J."/>
            <person name="Puri V."/>
            <person name="Reese M.G."/>
            <person name="Reinert K."/>
            <person name="Remington K."/>
            <person name="Saunders R.D.C."/>
            <person name="Scheeler F."/>
            <person name="Shen H."/>
            <person name="Shue B.C."/>
            <person name="Siden-Kiamos I."/>
            <person name="Simpson M."/>
            <person name="Skupski M.P."/>
            <person name="Smith T.J."/>
            <person name="Spier E."/>
            <person name="Spradling A.C."/>
            <person name="Stapleton M."/>
            <person name="Strong R."/>
            <person name="Sun E."/>
            <person name="Svirskas R."/>
            <person name="Tector C."/>
            <person name="Turner R."/>
            <person name="Venter E."/>
            <person name="Wang A.H."/>
            <person name="Wang X."/>
            <person name="Wang Z.-Y."/>
            <person name="Wassarman D.A."/>
            <person name="Weinstock G.M."/>
            <person name="Weissenbach J."/>
            <person name="Williams S.M."/>
            <person name="Woodage T."/>
            <person name="Worley K.C."/>
            <person name="Wu D."/>
            <person name="Yang S."/>
            <person name="Yao Q.A."/>
            <person name="Ye J."/>
            <person name="Yeh R.-F."/>
            <person name="Zaveri J.S."/>
            <person name="Zhan M."/>
            <person name="Zhang G."/>
            <person name="Zhao Q."/>
            <person name="Zheng L."/>
            <person name="Zheng X.H."/>
            <person name="Zhong F.N."/>
            <person name="Zhong W."/>
            <person name="Zhou X."/>
            <person name="Zhu S.C."/>
            <person name="Zhu X."/>
            <person name="Smith H.O."/>
            <person name="Gibbs R.A."/>
            <person name="Myers E.W."/>
            <person name="Rubin G.M."/>
            <person name="Venter J.C."/>
        </authorList>
    </citation>
    <scope>NUCLEOTIDE SEQUENCE [LARGE SCALE GENOMIC DNA]</scope>
    <source>
        <strain>Berkeley</strain>
    </source>
</reference>
<reference key="3">
    <citation type="journal article" date="2002" name="Genome Biol.">
        <title>Annotation of the Drosophila melanogaster euchromatic genome: a systematic review.</title>
        <authorList>
            <person name="Misra S."/>
            <person name="Crosby M.A."/>
            <person name="Mungall C.J."/>
            <person name="Matthews B.B."/>
            <person name="Campbell K.S."/>
            <person name="Hradecky P."/>
            <person name="Huang Y."/>
            <person name="Kaminker J.S."/>
            <person name="Millburn G.H."/>
            <person name="Prochnik S.E."/>
            <person name="Smith C.D."/>
            <person name="Tupy J.L."/>
            <person name="Whitfield E.J."/>
            <person name="Bayraktaroglu L."/>
            <person name="Berman B.P."/>
            <person name="Bettencourt B.R."/>
            <person name="Celniker S.E."/>
            <person name="de Grey A.D.N.J."/>
            <person name="Drysdale R.A."/>
            <person name="Harris N.L."/>
            <person name="Richter J."/>
            <person name="Russo S."/>
            <person name="Schroeder A.J."/>
            <person name="Shu S.Q."/>
            <person name="Stapleton M."/>
            <person name="Yamada C."/>
            <person name="Ashburner M."/>
            <person name="Gelbart W.M."/>
            <person name="Rubin G.M."/>
            <person name="Lewis S.E."/>
        </authorList>
    </citation>
    <scope>GENOME REANNOTATION</scope>
    <source>
        <strain>Berkeley</strain>
    </source>
</reference>
<evidence type="ECO:0000250" key="1">
    <source>
        <dbReference type="UniProtKB" id="P00860"/>
    </source>
</evidence>
<evidence type="ECO:0000250" key="2">
    <source>
        <dbReference type="UniProtKB" id="P07805"/>
    </source>
</evidence>
<evidence type="ECO:0000250" key="3">
    <source>
        <dbReference type="UniProtKB" id="P11926"/>
    </source>
</evidence>
<evidence type="ECO:0000305" key="4"/>
<name>DCOR2_DROME</name>
<keyword id="KW-0210">Decarboxylase</keyword>
<keyword id="KW-0456">Lyase</keyword>
<keyword id="KW-0620">Polyamine biosynthesis</keyword>
<keyword id="KW-0663">Pyridoxal phosphate</keyword>
<keyword id="KW-1185">Reference proteome</keyword>
<accession>P40808</accession>
<accession>Q9V353</accession>
<organism>
    <name type="scientific">Drosophila melanogaster</name>
    <name type="common">Fruit fly</name>
    <dbReference type="NCBI Taxonomy" id="7227"/>
    <lineage>
        <taxon>Eukaryota</taxon>
        <taxon>Metazoa</taxon>
        <taxon>Ecdysozoa</taxon>
        <taxon>Arthropoda</taxon>
        <taxon>Hexapoda</taxon>
        <taxon>Insecta</taxon>
        <taxon>Pterygota</taxon>
        <taxon>Neoptera</taxon>
        <taxon>Endopterygota</taxon>
        <taxon>Diptera</taxon>
        <taxon>Brachycera</taxon>
        <taxon>Muscomorpha</taxon>
        <taxon>Ephydroidea</taxon>
        <taxon>Drosophilidae</taxon>
        <taxon>Drosophila</taxon>
        <taxon>Sophophora</taxon>
    </lineage>
</organism>
<comment type="function">
    <text evidence="3">Catalyzes the first and rate-limiting step of polyamine biosynthesis that converts ornithine into putrescine, which is the precursor for the polyamines, spermidine and spermine. Polyamines are essential for cell proliferation and are implicated in cellular processes, ranging from DNA replication to apoptosis.</text>
</comment>
<comment type="catalytic activity">
    <reaction evidence="3">
        <text>L-ornithine + H(+) = putrescine + CO2</text>
        <dbReference type="Rhea" id="RHEA:22964"/>
        <dbReference type="ChEBI" id="CHEBI:15378"/>
        <dbReference type="ChEBI" id="CHEBI:16526"/>
        <dbReference type="ChEBI" id="CHEBI:46911"/>
        <dbReference type="ChEBI" id="CHEBI:326268"/>
        <dbReference type="EC" id="4.1.1.17"/>
    </reaction>
</comment>
<comment type="cofactor">
    <cofactor evidence="3">
        <name>pyridoxal 5'-phosphate</name>
        <dbReference type="ChEBI" id="CHEBI:597326"/>
    </cofactor>
</comment>
<comment type="activity regulation">
    <text evidence="3">Inhibited by antizyme (AZ) in response to polyamine levels. AZ inhibits the assembly of the functional homodimer by binding to ODC monomers and targeting them for ubiquitin-independent proteolytic destruction by the 26S proteasome.</text>
</comment>
<comment type="pathway">
    <text>Amine and polyamine biosynthesis; putrescine biosynthesis via L-ornithine pathway; putrescine from L-ornithine: step 1/1.</text>
</comment>
<comment type="subunit">
    <text evidence="3">Homodimer. Only the dimer is catalytically active, as the active sites are constructed of residues from both monomers.</text>
</comment>
<comment type="similarity">
    <text evidence="4">Belongs to the Orn/Lys/Arg decarboxylase class-II family.</text>
</comment>
<proteinExistence type="inferred from homology"/>
<gene>
    <name type="primary">Odc2</name>
    <name type="ORF">CG8719</name>
</gene>
<feature type="chain" id="PRO_0000149900" description="Ornithine decarboxylase 2">
    <location>
        <begin position="1"/>
        <end position="393"/>
    </location>
</feature>
<feature type="active site" description="Proton donor; shared with dimeric partner" evidence="3">
    <location>
        <position position="343"/>
    </location>
</feature>
<feature type="binding site" evidence="3">
    <location>
        <position position="194"/>
    </location>
    <ligand>
        <name>pyridoxal 5'-phosphate</name>
        <dbReference type="ChEBI" id="CHEBI:597326"/>
    </ligand>
</feature>
<feature type="binding site" evidence="3">
    <location>
        <position position="231"/>
    </location>
    <ligand>
        <name>pyridoxal 5'-phosphate</name>
        <dbReference type="ChEBI" id="CHEBI:597326"/>
    </ligand>
</feature>
<feature type="binding site" evidence="3">
    <location>
        <begin position="265"/>
        <end position="268"/>
    </location>
    <ligand>
        <name>pyridoxal 5'-phosphate</name>
        <dbReference type="ChEBI" id="CHEBI:597326"/>
    </ligand>
</feature>
<feature type="binding site" description="in other chain" evidence="2">
    <location>
        <begin position="314"/>
        <end position="315"/>
    </location>
    <ligand>
        <name>substrate</name>
        <note>ligand shared between dimeric partners</note>
    </ligand>
</feature>
<feature type="binding site" evidence="2">
    <location>
        <position position="344"/>
    </location>
    <ligand>
        <name>substrate</name>
        <note>ligand shared between dimeric partners</note>
    </ligand>
</feature>
<feature type="binding site" evidence="3">
    <location>
        <position position="371"/>
    </location>
    <ligand>
        <name>pyridoxal 5'-phosphate</name>
        <dbReference type="ChEBI" id="CHEBI:597326"/>
    </ligand>
</feature>
<feature type="site" description="Stacks against the aromatic ring of pyridoxal phosphate and stabilizes reaction intermediates" evidence="1">
    <location>
        <position position="191"/>
    </location>
</feature>
<feature type="modified residue" description="N6-(pyridoxal phosphate)lysine" evidence="3">
    <location>
        <position position="62"/>
    </location>
</feature>
<feature type="sequence conflict" description="In Ref. 1; CAA47166." evidence="4" ref="1">
    <original>L</original>
    <variation>F</variation>
    <location>
        <position position="94"/>
    </location>
</feature>
<feature type="sequence conflict" description="In Ref. 1; CAA47166." evidence="4" ref="1">
    <original>N</original>
    <variation>S</variation>
    <location>
        <position position="143"/>
    </location>
</feature>
<feature type="sequence conflict" description="In Ref. 1; CAA47166." evidence="4" ref="1">
    <original>E</original>
    <variation>K</variation>
    <location>
        <position position="241"/>
    </location>
</feature>
<feature type="sequence conflict" description="In Ref. 1; CAA47166." evidence="4" ref="1">
    <original>M</original>
    <variation>L</variation>
    <location>
        <position position="346"/>
    </location>
</feature>
<protein>
    <recommendedName>
        <fullName>Ornithine decarboxylase 2</fullName>
        <shortName>ODC</shortName>
        <ecNumber>4.1.1.17</ecNumber>
    </recommendedName>
    <alternativeName>
        <fullName>dODC2</fullName>
    </alternativeName>
</protein>